<dbReference type="EC" id="3.6.5.-" evidence="2"/>
<dbReference type="EMBL" id="AK135345">
    <property type="protein sequence ID" value="BAE22495.1"/>
    <property type="molecule type" value="mRNA"/>
</dbReference>
<dbReference type="EMBL" id="AK145186">
    <property type="protein sequence ID" value="BAE26280.1"/>
    <property type="molecule type" value="mRNA"/>
</dbReference>
<dbReference type="EMBL" id="AK146895">
    <property type="protein sequence ID" value="BAE27512.1"/>
    <property type="molecule type" value="mRNA"/>
</dbReference>
<dbReference type="EMBL" id="BC043724">
    <property type="protein sequence ID" value="AAH43724.1"/>
    <property type="molecule type" value="mRNA"/>
</dbReference>
<dbReference type="EMBL" id="BC080306">
    <property type="protein sequence ID" value="AAH80306.1"/>
    <property type="molecule type" value="mRNA"/>
</dbReference>
<dbReference type="CCDS" id="CCDS37311.1">
    <molecule id="Q3UM18-1"/>
</dbReference>
<dbReference type="RefSeq" id="NP_001403959.1">
    <molecule id="Q3UM18-2"/>
    <property type="nucleotide sequence ID" value="NM_001417030.1"/>
</dbReference>
<dbReference type="RefSeq" id="NP_835170.1">
    <molecule id="Q3UM18-1"/>
    <property type="nucleotide sequence ID" value="NM_178069.6"/>
</dbReference>
<dbReference type="SMR" id="Q3UM18"/>
<dbReference type="BioGRID" id="230241">
    <property type="interactions" value="37"/>
</dbReference>
<dbReference type="FunCoup" id="Q3UM18">
    <property type="interactions" value="4539"/>
</dbReference>
<dbReference type="IntAct" id="Q3UM18">
    <property type="interactions" value="2"/>
</dbReference>
<dbReference type="MINT" id="Q3UM18"/>
<dbReference type="STRING" id="10090.ENSMUSP00000112860"/>
<dbReference type="GlyGen" id="Q3UM18">
    <property type="glycosylation" value="1 site"/>
</dbReference>
<dbReference type="iPTMnet" id="Q3UM18"/>
<dbReference type="PhosphoSitePlus" id="Q3UM18"/>
<dbReference type="SwissPalm" id="Q3UM18"/>
<dbReference type="PaxDb" id="10090-ENSMUSP00000112860"/>
<dbReference type="PeptideAtlas" id="Q3UM18"/>
<dbReference type="ProteomicsDB" id="293401">
    <molecule id="Q3UM18-1"/>
</dbReference>
<dbReference type="ProteomicsDB" id="293402">
    <molecule id="Q3UM18-2"/>
</dbReference>
<dbReference type="Pumba" id="Q3UM18"/>
<dbReference type="Antibodypedia" id="46856">
    <property type="antibodies" value="45 antibodies from 16 providers"/>
</dbReference>
<dbReference type="DNASU" id="224092"/>
<dbReference type="Ensembl" id="ENSMUST00000117363.9">
    <molecule id="Q3UM18-1"/>
    <property type="protein sequence ID" value="ENSMUSP00000112860.3"/>
    <property type="gene ID" value="ENSMUSG00000022538.21"/>
</dbReference>
<dbReference type="GeneID" id="224092"/>
<dbReference type="KEGG" id="mmu:224092"/>
<dbReference type="UCSC" id="uc007ywv.1">
    <molecule id="Q3UM18-1"/>
    <property type="organism name" value="mouse"/>
</dbReference>
<dbReference type="AGR" id="MGI:107236"/>
<dbReference type="CTD" id="55341"/>
<dbReference type="MGI" id="MGI:107236">
    <property type="gene designation" value="Lsg1"/>
</dbReference>
<dbReference type="VEuPathDB" id="HostDB:ENSMUSG00000022538"/>
<dbReference type="eggNOG" id="KOG1424">
    <property type="taxonomic scope" value="Eukaryota"/>
</dbReference>
<dbReference type="GeneTree" id="ENSGT00940000156442"/>
<dbReference type="HOGENOM" id="CLU_011072_7_0_1"/>
<dbReference type="InParanoid" id="Q3UM18"/>
<dbReference type="OMA" id="VNKADMM"/>
<dbReference type="OrthoDB" id="61815at2759"/>
<dbReference type="PhylomeDB" id="Q3UM18"/>
<dbReference type="TreeFam" id="TF105747"/>
<dbReference type="BioGRID-ORCS" id="224092">
    <property type="hits" value="27 hits in 82 CRISPR screens"/>
</dbReference>
<dbReference type="ChiTaRS" id="Lsg1">
    <property type="organism name" value="mouse"/>
</dbReference>
<dbReference type="PRO" id="PR:Q3UM18"/>
<dbReference type="Proteomes" id="UP000000589">
    <property type="component" value="Chromosome 16"/>
</dbReference>
<dbReference type="RNAct" id="Q3UM18">
    <property type="molecule type" value="protein"/>
</dbReference>
<dbReference type="Bgee" id="ENSMUSG00000022538">
    <property type="expression patterns" value="Expressed in spermatocyte and 244 other cell types or tissues"/>
</dbReference>
<dbReference type="GO" id="GO:0015030">
    <property type="term" value="C:Cajal body"/>
    <property type="evidence" value="ECO:0000250"/>
    <property type="project" value="UniProtKB"/>
</dbReference>
<dbReference type="GO" id="GO:0005829">
    <property type="term" value="C:cytosol"/>
    <property type="evidence" value="ECO:0007669"/>
    <property type="project" value="Ensembl"/>
</dbReference>
<dbReference type="GO" id="GO:0005783">
    <property type="term" value="C:endoplasmic reticulum"/>
    <property type="evidence" value="ECO:0000250"/>
    <property type="project" value="UniProtKB"/>
</dbReference>
<dbReference type="GO" id="GO:0005525">
    <property type="term" value="F:GTP binding"/>
    <property type="evidence" value="ECO:0000250"/>
    <property type="project" value="UniProtKB"/>
</dbReference>
<dbReference type="GO" id="GO:0003924">
    <property type="term" value="F:GTPase activity"/>
    <property type="evidence" value="ECO:0007669"/>
    <property type="project" value="Ensembl"/>
</dbReference>
<dbReference type="GO" id="GO:0051168">
    <property type="term" value="P:nuclear export"/>
    <property type="evidence" value="ECO:0000250"/>
    <property type="project" value="UniProtKB"/>
</dbReference>
<dbReference type="GO" id="GO:0015031">
    <property type="term" value="P:protein transport"/>
    <property type="evidence" value="ECO:0007669"/>
    <property type="project" value="UniProtKB-KW"/>
</dbReference>
<dbReference type="CDD" id="cd01857">
    <property type="entry name" value="HSR1_MMR1"/>
    <property type="match status" value="1"/>
</dbReference>
<dbReference type="FunFam" id="3.40.50.300:FF:002533">
    <property type="entry name" value="Large subunit GTPase 1"/>
    <property type="match status" value="1"/>
</dbReference>
<dbReference type="FunFam" id="3.40.50.300:FF:003226">
    <property type="entry name" value="Large subunit GTPase 1 homolog"/>
    <property type="match status" value="1"/>
</dbReference>
<dbReference type="Gene3D" id="3.40.50.300">
    <property type="entry name" value="P-loop containing nucleotide triphosphate hydrolases"/>
    <property type="match status" value="2"/>
</dbReference>
<dbReference type="InterPro" id="IPR030378">
    <property type="entry name" value="G_CP_dom"/>
</dbReference>
<dbReference type="InterPro" id="IPR043358">
    <property type="entry name" value="GNL1-like"/>
</dbReference>
<dbReference type="InterPro" id="IPR006073">
    <property type="entry name" value="GTP-bd"/>
</dbReference>
<dbReference type="InterPro" id="IPR027417">
    <property type="entry name" value="P-loop_NTPase"/>
</dbReference>
<dbReference type="PANTHER" id="PTHR45709:SF2">
    <property type="entry name" value="LARGE SUBUNIT GTPASE 1 HOMOLOG"/>
    <property type="match status" value="1"/>
</dbReference>
<dbReference type="PANTHER" id="PTHR45709">
    <property type="entry name" value="LARGE SUBUNIT GTPASE 1 HOMOLOG-RELATED"/>
    <property type="match status" value="1"/>
</dbReference>
<dbReference type="Pfam" id="PF01926">
    <property type="entry name" value="MMR_HSR1"/>
    <property type="match status" value="1"/>
</dbReference>
<dbReference type="PRINTS" id="PR00326">
    <property type="entry name" value="GTP1OBG"/>
</dbReference>
<dbReference type="SUPFAM" id="SSF52540">
    <property type="entry name" value="P-loop containing nucleoside triphosphate hydrolases"/>
    <property type="match status" value="1"/>
</dbReference>
<dbReference type="PROSITE" id="PS51721">
    <property type="entry name" value="G_CP"/>
    <property type="match status" value="1"/>
</dbReference>
<evidence type="ECO:0000250" key="1">
    <source>
        <dbReference type="UniProtKB" id="P53145"/>
    </source>
</evidence>
<evidence type="ECO:0000250" key="2">
    <source>
        <dbReference type="UniProtKB" id="Q9H089"/>
    </source>
</evidence>
<evidence type="ECO:0000255" key="3"/>
<evidence type="ECO:0000255" key="4">
    <source>
        <dbReference type="PROSITE-ProRule" id="PRU01058"/>
    </source>
</evidence>
<evidence type="ECO:0000256" key="5">
    <source>
        <dbReference type="SAM" id="MobiDB-lite"/>
    </source>
</evidence>
<evidence type="ECO:0000303" key="6">
    <source>
    </source>
</evidence>
<evidence type="ECO:0000305" key="7"/>
<evidence type="ECO:0000312" key="8">
    <source>
        <dbReference type="MGI" id="MGI:107236"/>
    </source>
</evidence>
<reference key="1">
    <citation type="journal article" date="2005" name="Science">
        <title>The transcriptional landscape of the mammalian genome.</title>
        <authorList>
            <person name="Carninci P."/>
            <person name="Kasukawa T."/>
            <person name="Katayama S."/>
            <person name="Gough J."/>
            <person name="Frith M.C."/>
            <person name="Maeda N."/>
            <person name="Oyama R."/>
            <person name="Ravasi T."/>
            <person name="Lenhard B."/>
            <person name="Wells C."/>
            <person name="Kodzius R."/>
            <person name="Shimokawa K."/>
            <person name="Bajic V.B."/>
            <person name="Brenner S.E."/>
            <person name="Batalov S."/>
            <person name="Forrest A.R."/>
            <person name="Zavolan M."/>
            <person name="Davis M.J."/>
            <person name="Wilming L.G."/>
            <person name="Aidinis V."/>
            <person name="Allen J.E."/>
            <person name="Ambesi-Impiombato A."/>
            <person name="Apweiler R."/>
            <person name="Aturaliya R.N."/>
            <person name="Bailey T.L."/>
            <person name="Bansal M."/>
            <person name="Baxter L."/>
            <person name="Beisel K.W."/>
            <person name="Bersano T."/>
            <person name="Bono H."/>
            <person name="Chalk A.M."/>
            <person name="Chiu K.P."/>
            <person name="Choudhary V."/>
            <person name="Christoffels A."/>
            <person name="Clutterbuck D.R."/>
            <person name="Crowe M.L."/>
            <person name="Dalla E."/>
            <person name="Dalrymple B.P."/>
            <person name="de Bono B."/>
            <person name="Della Gatta G."/>
            <person name="di Bernardo D."/>
            <person name="Down T."/>
            <person name="Engstrom P."/>
            <person name="Fagiolini M."/>
            <person name="Faulkner G."/>
            <person name="Fletcher C.F."/>
            <person name="Fukushima T."/>
            <person name="Furuno M."/>
            <person name="Futaki S."/>
            <person name="Gariboldi M."/>
            <person name="Georgii-Hemming P."/>
            <person name="Gingeras T.R."/>
            <person name="Gojobori T."/>
            <person name="Green R.E."/>
            <person name="Gustincich S."/>
            <person name="Harbers M."/>
            <person name="Hayashi Y."/>
            <person name="Hensch T.K."/>
            <person name="Hirokawa N."/>
            <person name="Hill D."/>
            <person name="Huminiecki L."/>
            <person name="Iacono M."/>
            <person name="Ikeo K."/>
            <person name="Iwama A."/>
            <person name="Ishikawa T."/>
            <person name="Jakt M."/>
            <person name="Kanapin A."/>
            <person name="Katoh M."/>
            <person name="Kawasawa Y."/>
            <person name="Kelso J."/>
            <person name="Kitamura H."/>
            <person name="Kitano H."/>
            <person name="Kollias G."/>
            <person name="Krishnan S.P."/>
            <person name="Kruger A."/>
            <person name="Kummerfeld S.K."/>
            <person name="Kurochkin I.V."/>
            <person name="Lareau L.F."/>
            <person name="Lazarevic D."/>
            <person name="Lipovich L."/>
            <person name="Liu J."/>
            <person name="Liuni S."/>
            <person name="McWilliam S."/>
            <person name="Madan Babu M."/>
            <person name="Madera M."/>
            <person name="Marchionni L."/>
            <person name="Matsuda H."/>
            <person name="Matsuzawa S."/>
            <person name="Miki H."/>
            <person name="Mignone F."/>
            <person name="Miyake S."/>
            <person name="Morris K."/>
            <person name="Mottagui-Tabar S."/>
            <person name="Mulder N."/>
            <person name="Nakano N."/>
            <person name="Nakauchi H."/>
            <person name="Ng P."/>
            <person name="Nilsson R."/>
            <person name="Nishiguchi S."/>
            <person name="Nishikawa S."/>
            <person name="Nori F."/>
            <person name="Ohara O."/>
            <person name="Okazaki Y."/>
            <person name="Orlando V."/>
            <person name="Pang K.C."/>
            <person name="Pavan W.J."/>
            <person name="Pavesi G."/>
            <person name="Pesole G."/>
            <person name="Petrovsky N."/>
            <person name="Piazza S."/>
            <person name="Reed J."/>
            <person name="Reid J.F."/>
            <person name="Ring B.Z."/>
            <person name="Ringwald M."/>
            <person name="Rost B."/>
            <person name="Ruan Y."/>
            <person name="Salzberg S.L."/>
            <person name="Sandelin A."/>
            <person name="Schneider C."/>
            <person name="Schoenbach C."/>
            <person name="Sekiguchi K."/>
            <person name="Semple C.A."/>
            <person name="Seno S."/>
            <person name="Sessa L."/>
            <person name="Sheng Y."/>
            <person name="Shibata Y."/>
            <person name="Shimada H."/>
            <person name="Shimada K."/>
            <person name="Silva D."/>
            <person name="Sinclair B."/>
            <person name="Sperling S."/>
            <person name="Stupka E."/>
            <person name="Sugiura K."/>
            <person name="Sultana R."/>
            <person name="Takenaka Y."/>
            <person name="Taki K."/>
            <person name="Tammoja K."/>
            <person name="Tan S.L."/>
            <person name="Tang S."/>
            <person name="Taylor M.S."/>
            <person name="Tegner J."/>
            <person name="Teichmann S.A."/>
            <person name="Ueda H.R."/>
            <person name="van Nimwegen E."/>
            <person name="Verardo R."/>
            <person name="Wei C.L."/>
            <person name="Yagi K."/>
            <person name="Yamanishi H."/>
            <person name="Zabarovsky E."/>
            <person name="Zhu S."/>
            <person name="Zimmer A."/>
            <person name="Hide W."/>
            <person name="Bult C."/>
            <person name="Grimmond S.M."/>
            <person name="Teasdale R.D."/>
            <person name="Liu E.T."/>
            <person name="Brusic V."/>
            <person name="Quackenbush J."/>
            <person name="Wahlestedt C."/>
            <person name="Mattick J.S."/>
            <person name="Hume D.A."/>
            <person name="Kai C."/>
            <person name="Sasaki D."/>
            <person name="Tomaru Y."/>
            <person name="Fukuda S."/>
            <person name="Kanamori-Katayama M."/>
            <person name="Suzuki M."/>
            <person name="Aoki J."/>
            <person name="Arakawa T."/>
            <person name="Iida J."/>
            <person name="Imamura K."/>
            <person name="Itoh M."/>
            <person name="Kato T."/>
            <person name="Kawaji H."/>
            <person name="Kawagashira N."/>
            <person name="Kawashima T."/>
            <person name="Kojima M."/>
            <person name="Kondo S."/>
            <person name="Konno H."/>
            <person name="Nakano K."/>
            <person name="Ninomiya N."/>
            <person name="Nishio T."/>
            <person name="Okada M."/>
            <person name="Plessy C."/>
            <person name="Shibata K."/>
            <person name="Shiraki T."/>
            <person name="Suzuki S."/>
            <person name="Tagami M."/>
            <person name="Waki K."/>
            <person name="Watahiki A."/>
            <person name="Okamura-Oho Y."/>
            <person name="Suzuki H."/>
            <person name="Kawai J."/>
            <person name="Hayashizaki Y."/>
        </authorList>
    </citation>
    <scope>NUCLEOTIDE SEQUENCE [LARGE SCALE MRNA] (ISOFORM 1)</scope>
    <source>
        <strain>C57BL/6J</strain>
        <tissue>Heart</tissue>
        <tissue>Mammary gland</tissue>
        <tissue>Muellerian duct</tissue>
    </source>
</reference>
<reference key="2">
    <citation type="journal article" date="2004" name="Genome Res.">
        <title>The status, quality, and expansion of the NIH full-length cDNA project: the Mammalian Gene Collection (MGC).</title>
        <authorList>
            <consortium name="The MGC Project Team"/>
        </authorList>
    </citation>
    <scope>NUCLEOTIDE SEQUENCE [LARGE SCALE MRNA] (ISOFORM 1)</scope>
    <scope>NUCLEOTIDE SEQUENCE [LARGE SCALE MRNA] OF 44-644 (ISOFORM 2)</scope>
    <source>
        <strain>C57BL/6J</strain>
        <strain>FVB/NJ</strain>
        <tissue>Brain</tissue>
        <tissue>Mammary tumor</tissue>
    </source>
</reference>
<reference key="3">
    <citation type="journal article" date="2010" name="Cell">
        <title>A tissue-specific atlas of mouse protein phosphorylation and expression.</title>
        <authorList>
            <person name="Huttlin E.L."/>
            <person name="Jedrychowski M.P."/>
            <person name="Elias J.E."/>
            <person name="Goswami T."/>
            <person name="Rad R."/>
            <person name="Beausoleil S.A."/>
            <person name="Villen J."/>
            <person name="Haas W."/>
            <person name="Sowa M.E."/>
            <person name="Gygi S.P."/>
        </authorList>
    </citation>
    <scope>IDENTIFICATION BY MASS SPECTROMETRY [LARGE SCALE ANALYSIS]</scope>
    <source>
        <tissue>Pancreas</tissue>
        <tissue>Spleen</tissue>
        <tissue>Testis</tissue>
    </source>
</reference>
<sequence>MGRRRAPGGGSLGRVLIRQQTQRSRSHRHTDSWLHTSELNDGYDWGRLNLQSVTEQSSLEDFLATAELAGTEFVAEKLNIKFVPPEARTGLLSFEESQRIKKLHEENRQFLCIPRRPNWDRKTSPEELKQAEKDNFLKWRRQLVRLEEEQKLILTPFERNLDFWRQLWRVIERSDIVVQIVDARNPLLFRCEDLECYVKEIDAAKENVILINKADLLTAEQRFAWAVHFEKEGVKVIFWSALAETDHLNGDLKEEVDSVAGDTNKTESESSSLDANEIPHRDLISLSEESASDSGDSKYEDCQEDEEEDWQTCSEEDSVPEEEEGCNADSETQNRKNAENQQVNNDSYLVSKQELLELFKKLHTGKKVKDGQLTVGLVGYPNVGKSSTINTIMGNKKVSVSATPGHTKHFQTLYVEPGLCLCDCPGLVMPSFVSTKAEMICNGILPIDQMRDHVPPVSLVCQNIPRRVLEVTYGINIIKPREDEDPYRPPTSEELLTAYGCMRGFMTAHGQPDQPRSARYILKDYVGGKLLYCHPPPGKDPVAFQHQHQQLLESKVKGGELRLQPGKGRKAKQIENVVDKTFFHQENVRALTKGVQAVMGYKPGHGLVTAAAASAENVPGKPWKKHGNRNKKEKSRRLYKHLDV</sequence>
<comment type="function">
    <text evidence="2">Functions as a GTPase. May act by mediating the release of NMD3 from the 60S ribosomal subunit after export into the cytoplasm during the 60S ribosomal subunit maturation.</text>
</comment>
<comment type="catalytic activity">
    <reaction evidence="2">
        <text>GTP + H2O = GDP + phosphate + H(+)</text>
        <dbReference type="Rhea" id="RHEA:19669"/>
        <dbReference type="ChEBI" id="CHEBI:15377"/>
        <dbReference type="ChEBI" id="CHEBI:15378"/>
        <dbReference type="ChEBI" id="CHEBI:37565"/>
        <dbReference type="ChEBI" id="CHEBI:43474"/>
        <dbReference type="ChEBI" id="CHEBI:58189"/>
    </reaction>
</comment>
<comment type="subcellular location">
    <subcellularLocation>
        <location evidence="2">Cytoplasm</location>
    </subcellularLocation>
    <subcellularLocation>
        <location evidence="2">Endoplasmic reticulum</location>
    </subcellularLocation>
    <subcellularLocation>
        <location evidence="2">Nucleus</location>
        <location evidence="2">Cajal body</location>
    </subcellularLocation>
    <text evidence="2">between the cytosol and Cajal bodies via a XPO1/CRM1-dependent export mechanism.</text>
</comment>
<comment type="alternative products">
    <event type="alternative splicing"/>
    <isoform>
        <id>Q3UM18-1</id>
        <name>1</name>
        <sequence type="displayed"/>
    </isoform>
    <isoform>
        <id>Q3UM18-2</id>
        <name>2</name>
        <sequence type="described" ref="VSP_032275"/>
    </isoform>
</comment>
<comment type="domain">
    <text evidence="2">In contrast to other GTP-binding proteins, this family is characterized by a circular permutation of the GTPase motifs described by a G4-G1-G3 pattern.</text>
</comment>
<comment type="similarity">
    <text evidence="4">Belongs to the TRAFAC class YlqF/YawG GTPase family. LSG1 subfamily.</text>
</comment>
<organism>
    <name type="scientific">Mus musculus</name>
    <name type="common">Mouse</name>
    <dbReference type="NCBI Taxonomy" id="10090"/>
    <lineage>
        <taxon>Eukaryota</taxon>
        <taxon>Metazoa</taxon>
        <taxon>Chordata</taxon>
        <taxon>Craniata</taxon>
        <taxon>Vertebrata</taxon>
        <taxon>Euteleostomi</taxon>
        <taxon>Mammalia</taxon>
        <taxon>Eutheria</taxon>
        <taxon>Euarchontoglires</taxon>
        <taxon>Glires</taxon>
        <taxon>Rodentia</taxon>
        <taxon>Myomorpha</taxon>
        <taxon>Muroidea</taxon>
        <taxon>Muridae</taxon>
        <taxon>Murinae</taxon>
        <taxon>Mus</taxon>
        <taxon>Mus</taxon>
    </lineage>
</organism>
<proteinExistence type="evidence at protein level"/>
<feature type="chain" id="PRO_0000324555" description="Large subunit GTPase 1 homolog">
    <location>
        <begin position="1"/>
        <end position="644"/>
    </location>
</feature>
<feature type="domain" description="CP-type G" evidence="4">
    <location>
        <begin position="164"/>
        <end position="430"/>
    </location>
</feature>
<feature type="region of interest" description="Disordered" evidence="5">
    <location>
        <begin position="1"/>
        <end position="31"/>
    </location>
</feature>
<feature type="region of interest" description="Disordered" evidence="5">
    <location>
        <begin position="253"/>
        <end position="345"/>
    </location>
</feature>
<feature type="region of interest" description="Disordered" evidence="5">
    <location>
        <begin position="618"/>
        <end position="644"/>
    </location>
</feature>
<feature type="compositionally biased region" description="Acidic residues" evidence="5">
    <location>
        <begin position="302"/>
        <end position="326"/>
    </location>
</feature>
<feature type="compositionally biased region" description="Basic residues" evidence="5">
    <location>
        <begin position="622"/>
        <end position="644"/>
    </location>
</feature>
<feature type="binding site" evidence="3">
    <location>
        <begin position="212"/>
        <end position="215"/>
    </location>
    <ligand>
        <name>GTP</name>
        <dbReference type="ChEBI" id="CHEBI:37565"/>
    </ligand>
</feature>
<feature type="binding site" evidence="3">
    <location>
        <begin position="379"/>
        <end position="386"/>
    </location>
    <ligand>
        <name>GTP</name>
        <dbReference type="ChEBI" id="CHEBI:37565"/>
    </ligand>
</feature>
<feature type="binding site" evidence="3">
    <location>
        <begin position="423"/>
        <end position="426"/>
    </location>
    <ligand>
        <name>GTP</name>
        <dbReference type="ChEBI" id="CHEBI:37565"/>
    </ligand>
</feature>
<feature type="modified residue" description="Phosphoserine" evidence="2">
    <location>
        <position position="93"/>
    </location>
</feature>
<feature type="modified residue" description="Phosphoserine" evidence="2">
    <location>
        <position position="97"/>
    </location>
</feature>
<feature type="splice variant" id="VSP_032275" description="In isoform 2." evidence="6">
    <location>
        <begin position="146"/>
        <end position="174"/>
    </location>
</feature>
<feature type="sequence conflict" description="In Ref. 1; BAE26280." evidence="7" ref="1">
    <original>I</original>
    <variation>F</variation>
    <location>
        <position position="284"/>
    </location>
</feature>
<feature type="sequence conflict" description="In Ref. 1; BAE26280." evidence="7" ref="1">
    <original>A</original>
    <variation>E</variation>
    <location>
        <position position="291"/>
    </location>
</feature>
<feature type="sequence conflict" description="In Ref. 1; BAE26280." evidence="7" ref="1">
    <original>K</original>
    <variation>E</variation>
    <location>
        <position position="298"/>
    </location>
</feature>
<feature type="sequence conflict" description="In Ref. 1; BAE26280." evidence="7" ref="1">
    <original>P</original>
    <variation>PE</variation>
    <location>
        <position position="320"/>
    </location>
</feature>
<feature type="sequence conflict" description="In Ref. 1; BAE26280." evidence="7" ref="1">
    <original>N</original>
    <variation>P</variation>
    <location>
        <position position="327"/>
    </location>
</feature>
<feature type="sequence conflict" description="In Ref. 1; BAE26280." evidence="7" ref="1">
    <original>A</original>
    <variation>T</variation>
    <location>
        <position position="338"/>
    </location>
</feature>
<protein>
    <recommendedName>
        <fullName evidence="1">Large subunit GTPase 1 homolog</fullName>
        <ecNumber evidence="2">3.6.5.-</ecNumber>
    </recommendedName>
</protein>
<keyword id="KW-0025">Alternative splicing</keyword>
<keyword id="KW-0963">Cytoplasm</keyword>
<keyword id="KW-0256">Endoplasmic reticulum</keyword>
<keyword id="KW-0342">GTP-binding</keyword>
<keyword id="KW-0378">Hydrolase</keyword>
<keyword id="KW-0547">Nucleotide-binding</keyword>
<keyword id="KW-0539">Nucleus</keyword>
<keyword id="KW-0597">Phosphoprotein</keyword>
<keyword id="KW-0653">Protein transport</keyword>
<keyword id="KW-1185">Reference proteome</keyword>
<keyword id="KW-0813">Transport</keyword>
<gene>
    <name evidence="8" type="primary">Lsg1</name>
    <name type="synonym">D16Bwg1547e</name>
</gene>
<name>LSG1_MOUSE</name>
<accession>Q3UM18</accession>
<accession>Q68ED9</accession>
<accession>Q80V36</accession>